<name>HHEX_XENTR</name>
<protein>
    <recommendedName>
        <fullName>Hematopoietically-expressed homeobox protein hhex</fullName>
        <shortName>Homeobox protein hex</shortName>
        <shortName>tHex</shortName>
    </recommendedName>
</protein>
<reference evidence="8 9" key="1">
    <citation type="journal article" date="2003" name="Dev. Dyn.">
        <title>Molecular components of the endoderm specification pathway in Xenopus tropicalis.</title>
        <authorList>
            <person name="D'Souza A."/>
            <person name="Lee M."/>
            <person name="Taverner N."/>
            <person name="Mason J."/>
            <person name="Carruthers S."/>
            <person name="Smith J.C."/>
            <person name="Amaya E."/>
            <person name="Papalopulu N."/>
            <person name="Zorn A.M."/>
        </authorList>
    </citation>
    <scope>NUCLEOTIDE SEQUENCE [MRNA]</scope>
    <scope>TISSUE SPECIFICITY</scope>
    <source>
        <tissue evidence="9">Gastrula</tissue>
    </source>
</reference>
<reference evidence="10" key="2">
    <citation type="submission" date="2006-10" db="EMBL/GenBank/DDBJ databases">
        <authorList>
            <consortium name="Sanger Xenopus tropicalis EST/cDNA project"/>
        </authorList>
    </citation>
    <scope>NUCLEOTIDE SEQUENCE [LARGE SCALE MRNA]</scope>
    <source>
        <tissue evidence="10">Gastrula</tissue>
    </source>
</reference>
<evidence type="ECO:0000250" key="1">
    <source>
        <dbReference type="UniProtKB" id="O13023"/>
    </source>
</evidence>
<evidence type="ECO:0000250" key="2">
    <source>
        <dbReference type="UniProtKB" id="Q05502"/>
    </source>
</evidence>
<evidence type="ECO:0000250" key="3">
    <source>
        <dbReference type="UniProtKB" id="Q9IAV3"/>
    </source>
</evidence>
<evidence type="ECO:0000255" key="4"/>
<evidence type="ECO:0000255" key="5">
    <source>
        <dbReference type="PROSITE-ProRule" id="PRU00108"/>
    </source>
</evidence>
<evidence type="ECO:0000256" key="6">
    <source>
        <dbReference type="SAM" id="MobiDB-lite"/>
    </source>
</evidence>
<evidence type="ECO:0000269" key="7">
    <source>
    </source>
</evidence>
<evidence type="ECO:0000305" key="8"/>
<evidence type="ECO:0000312" key="9">
    <source>
        <dbReference type="EMBL" id="AAN78202.1"/>
    </source>
</evidence>
<evidence type="ECO:0000312" key="10">
    <source>
        <dbReference type="EMBL" id="CAJ83926.1"/>
    </source>
</evidence>
<comment type="function">
    <text evidence="1 2 3">Recognizes the DNA sequence 5'-ATTAA-3'. Transcriptional repressor. Regulates the differentiation of both endothelial and blood cells. Probably plays a role in the proliferation of vascular endothelial cells during blood vessel development. Establishes anterior identity at two levels; acts early to enhance canonical wnt-signaling by repressing expression of tle4, and acts later to inhibit nodal-signaling by directly targeting nodal/nr1 and nodal2/nr2. May play a role in liver development. Induces heart development (By similarity).</text>
</comment>
<comment type="subcellular location">
    <subcellularLocation>
        <location evidence="4 8">Nucleus</location>
    </subcellularLocation>
</comment>
<comment type="tissue specificity">
    <text evidence="7">Expressed in the most dorsoanterior endomesoderm of the blastula and gastrula embryo, and later is restricted to the forming liver diverticulum.</text>
</comment>
<keyword id="KW-0217">Developmental protein</keyword>
<keyword id="KW-0238">DNA-binding</keyword>
<keyword id="KW-0371">Homeobox</keyword>
<keyword id="KW-0539">Nucleus</keyword>
<keyword id="KW-1185">Reference proteome</keyword>
<keyword id="KW-0678">Repressor</keyword>
<keyword id="KW-0804">Transcription</keyword>
<keyword id="KW-0805">Transcription regulation</keyword>
<keyword id="KW-0879">Wnt signaling pathway</keyword>
<accession>Q8AWG6</accession>
<feature type="chain" id="PRO_0000326221" description="Hematopoietically-expressed homeobox protein hhex">
    <location>
        <begin position="1"/>
        <end position="274"/>
    </location>
</feature>
<feature type="DNA-binding region" description="Homeobox" evidence="5">
    <location>
        <begin position="139"/>
        <end position="198"/>
    </location>
</feature>
<feature type="region of interest" description="Disordered" evidence="6">
    <location>
        <begin position="197"/>
        <end position="274"/>
    </location>
</feature>
<feature type="compositionally biased region" description="Polar residues" evidence="6">
    <location>
        <begin position="237"/>
        <end position="248"/>
    </location>
</feature>
<feature type="compositionally biased region" description="Acidic residues" evidence="6">
    <location>
        <begin position="249"/>
        <end position="263"/>
    </location>
</feature>
<gene>
    <name evidence="10" type="primary">hhex</name>
    <name evidence="9" type="synonym">hex</name>
    <name type="ORF">TGas075h17.1</name>
</gene>
<proteinExistence type="evidence at transcript level"/>
<organism>
    <name type="scientific">Xenopus tropicalis</name>
    <name type="common">Western clawed frog</name>
    <name type="synonym">Silurana tropicalis</name>
    <dbReference type="NCBI Taxonomy" id="8364"/>
    <lineage>
        <taxon>Eukaryota</taxon>
        <taxon>Metazoa</taxon>
        <taxon>Chordata</taxon>
        <taxon>Craniata</taxon>
        <taxon>Vertebrata</taxon>
        <taxon>Euteleostomi</taxon>
        <taxon>Amphibia</taxon>
        <taxon>Batrachia</taxon>
        <taxon>Anura</taxon>
        <taxon>Pipoidea</taxon>
        <taxon>Pipidae</taxon>
        <taxon>Xenopodinae</taxon>
        <taxon>Xenopus</taxon>
        <taxon>Silurana</taxon>
    </lineage>
</organism>
<sequence>MQYQHPSSSALGLSVPLYAPTPLQPVHPTPFYIDDILGRSSASNGTPALPTPTLPSPNSSFTSLVATYRTPIYEPTPIHPAFTHPGAALAASYGASTYANPLYPFSRPVSEYTHALIRHDTLGKPLLWSPFIQRPLHKRKGGQVRFSNDQTIELEKKFETQKYLSPPERKRLAKMLQLSERQVKTWFQNRRAKWRRLKQENPQGNKKDETESLENICEESQERCLSAEQKSRESSLDEPTSSPTSQETLDSEVSDDSDQEVDIEGDKGFYNCAH</sequence>
<dbReference type="EMBL" id="AY160969">
    <property type="protein sequence ID" value="AAN78202.1"/>
    <property type="molecule type" value="mRNA"/>
</dbReference>
<dbReference type="EMBL" id="CR761571">
    <property type="protein sequence ID" value="CAJ83926.1"/>
    <property type="molecule type" value="mRNA"/>
</dbReference>
<dbReference type="RefSeq" id="NP_989420.1">
    <property type="nucleotide sequence ID" value="NM_204089.1"/>
</dbReference>
<dbReference type="SMR" id="Q8AWG6"/>
<dbReference type="FunCoup" id="Q8AWG6">
    <property type="interactions" value="1340"/>
</dbReference>
<dbReference type="STRING" id="8364.ENSXETP00000034332"/>
<dbReference type="PaxDb" id="8364-ENSXETP00000057734"/>
<dbReference type="GeneID" id="395060"/>
<dbReference type="KEGG" id="xtr:395060"/>
<dbReference type="AGR" id="Xenbase:XB-GENE-487159"/>
<dbReference type="CTD" id="3087"/>
<dbReference type="Xenbase" id="XB-GENE-487159">
    <property type="gene designation" value="hhex"/>
</dbReference>
<dbReference type="eggNOG" id="KOG0483">
    <property type="taxonomic scope" value="Eukaryota"/>
</dbReference>
<dbReference type="InParanoid" id="Q8AWG6"/>
<dbReference type="OMA" id="FTGSFYP"/>
<dbReference type="OrthoDB" id="6159439at2759"/>
<dbReference type="Proteomes" id="UP000008143">
    <property type="component" value="Chromosome 7"/>
</dbReference>
<dbReference type="Bgee" id="ENSXETG00000012215">
    <property type="expression patterns" value="Expressed in liver and 18 other cell types or tissues"/>
</dbReference>
<dbReference type="GO" id="GO:0005634">
    <property type="term" value="C:nucleus"/>
    <property type="evidence" value="ECO:0000250"/>
    <property type="project" value="UniProtKB"/>
</dbReference>
<dbReference type="GO" id="GO:0000981">
    <property type="term" value="F:DNA-binding transcription factor activity, RNA polymerase II-specific"/>
    <property type="evidence" value="ECO:0007669"/>
    <property type="project" value="InterPro"/>
</dbReference>
<dbReference type="GO" id="GO:0043565">
    <property type="term" value="F:sequence-specific DNA binding"/>
    <property type="evidence" value="ECO:0000250"/>
    <property type="project" value="UniProtKB"/>
</dbReference>
<dbReference type="GO" id="GO:0009952">
    <property type="term" value="P:anterior/posterior pattern specification"/>
    <property type="evidence" value="ECO:0000250"/>
    <property type="project" value="UniProtKB"/>
</dbReference>
<dbReference type="GO" id="GO:0035162">
    <property type="term" value="P:embryonic hemopoiesis"/>
    <property type="evidence" value="ECO:0000250"/>
    <property type="project" value="UniProtKB"/>
</dbReference>
<dbReference type="GO" id="GO:0007507">
    <property type="term" value="P:heart development"/>
    <property type="evidence" value="ECO:0000250"/>
    <property type="project" value="UniProtKB"/>
</dbReference>
<dbReference type="GO" id="GO:0001889">
    <property type="term" value="P:liver development"/>
    <property type="evidence" value="ECO:0000250"/>
    <property type="project" value="UniProtKB"/>
</dbReference>
<dbReference type="GO" id="GO:0045892">
    <property type="term" value="P:negative regulation of DNA-templated transcription"/>
    <property type="evidence" value="ECO:0000250"/>
    <property type="project" value="UniProtKB"/>
</dbReference>
<dbReference type="GO" id="GO:0000122">
    <property type="term" value="P:negative regulation of transcription by RNA polymerase II"/>
    <property type="evidence" value="ECO:0000250"/>
    <property type="project" value="UniProtKB"/>
</dbReference>
<dbReference type="GO" id="GO:0030177">
    <property type="term" value="P:positive regulation of Wnt signaling pathway"/>
    <property type="evidence" value="ECO:0000250"/>
    <property type="project" value="UniProtKB"/>
</dbReference>
<dbReference type="GO" id="GO:0001570">
    <property type="term" value="P:vasculogenesis"/>
    <property type="evidence" value="ECO:0000250"/>
    <property type="project" value="UniProtKB"/>
</dbReference>
<dbReference type="GO" id="GO:0016055">
    <property type="term" value="P:Wnt signaling pathway"/>
    <property type="evidence" value="ECO:0007669"/>
    <property type="project" value="UniProtKB-KW"/>
</dbReference>
<dbReference type="CDD" id="cd00086">
    <property type="entry name" value="homeodomain"/>
    <property type="match status" value="1"/>
</dbReference>
<dbReference type="FunFam" id="1.10.10.60:FF:000178">
    <property type="entry name" value="hematopoietically-expressed homeobox protein HHEX"/>
    <property type="match status" value="1"/>
</dbReference>
<dbReference type="Gene3D" id="1.10.10.60">
    <property type="entry name" value="Homeodomain-like"/>
    <property type="match status" value="1"/>
</dbReference>
<dbReference type="InterPro" id="IPR001356">
    <property type="entry name" value="HD"/>
</dbReference>
<dbReference type="InterPro" id="IPR020479">
    <property type="entry name" value="HD_metazoa"/>
</dbReference>
<dbReference type="InterPro" id="IPR017970">
    <property type="entry name" value="Homeobox_CS"/>
</dbReference>
<dbReference type="InterPro" id="IPR051000">
    <property type="entry name" value="Homeobox_DNA-bind_prot"/>
</dbReference>
<dbReference type="InterPro" id="IPR009057">
    <property type="entry name" value="Homeodomain-like_sf"/>
</dbReference>
<dbReference type="PANTHER" id="PTHR24324:SF5">
    <property type="entry name" value="HEMATOPOIETICALLY-EXPRESSED HOMEOBOX PROTEIN HHEX"/>
    <property type="match status" value="1"/>
</dbReference>
<dbReference type="PANTHER" id="PTHR24324">
    <property type="entry name" value="HOMEOBOX PROTEIN HHEX"/>
    <property type="match status" value="1"/>
</dbReference>
<dbReference type="Pfam" id="PF00046">
    <property type="entry name" value="Homeodomain"/>
    <property type="match status" value="1"/>
</dbReference>
<dbReference type="PRINTS" id="PR00024">
    <property type="entry name" value="HOMEOBOX"/>
</dbReference>
<dbReference type="SMART" id="SM00389">
    <property type="entry name" value="HOX"/>
    <property type="match status" value="1"/>
</dbReference>
<dbReference type="SUPFAM" id="SSF46689">
    <property type="entry name" value="Homeodomain-like"/>
    <property type="match status" value="1"/>
</dbReference>
<dbReference type="PROSITE" id="PS00027">
    <property type="entry name" value="HOMEOBOX_1"/>
    <property type="match status" value="1"/>
</dbReference>
<dbReference type="PROSITE" id="PS50071">
    <property type="entry name" value="HOMEOBOX_2"/>
    <property type="match status" value="1"/>
</dbReference>